<dbReference type="EMBL" id="U00096">
    <property type="protein sequence ID" value="AAC74222.1"/>
    <property type="molecule type" value="Genomic_DNA"/>
</dbReference>
<dbReference type="EMBL" id="AP009048">
    <property type="protein sequence ID" value="BAE76376.1"/>
    <property type="molecule type" value="Genomic_DNA"/>
</dbReference>
<dbReference type="PIR" id="G64858">
    <property type="entry name" value="G64858"/>
</dbReference>
<dbReference type="RefSeq" id="NP_415656.1">
    <property type="nucleotide sequence ID" value="NC_000913.3"/>
</dbReference>
<dbReference type="RefSeq" id="WP_010723094.1">
    <property type="nucleotide sequence ID" value="NZ_CP064683.1"/>
</dbReference>
<dbReference type="BioGRID" id="4263100">
    <property type="interactions" value="7"/>
</dbReference>
<dbReference type="FunCoup" id="P75968">
    <property type="interactions" value="7"/>
</dbReference>
<dbReference type="STRING" id="511145.b1138"/>
<dbReference type="PaxDb" id="511145-b1138"/>
<dbReference type="EnsemblBacteria" id="AAC74222">
    <property type="protein sequence ID" value="AAC74222"/>
    <property type="gene ID" value="b1138"/>
</dbReference>
<dbReference type="GeneID" id="946722"/>
<dbReference type="KEGG" id="ecj:JW5166"/>
<dbReference type="KEGG" id="eco:b1138"/>
<dbReference type="PATRIC" id="fig|511145.12.peg.1184"/>
<dbReference type="EchoBASE" id="EB3223"/>
<dbReference type="eggNOG" id="ENOG5033SJW">
    <property type="taxonomic scope" value="Bacteria"/>
</dbReference>
<dbReference type="HOGENOM" id="CLU_1198300_0_0_6"/>
<dbReference type="InParanoid" id="P75968"/>
<dbReference type="BioCyc" id="EcoCyc:G6583-MONOMER"/>
<dbReference type="PRO" id="PR:P75968"/>
<dbReference type="Proteomes" id="UP000000625">
    <property type="component" value="Chromosome"/>
</dbReference>
<dbReference type="GO" id="GO:0005886">
    <property type="term" value="C:plasma membrane"/>
    <property type="evidence" value="ECO:0007669"/>
    <property type="project" value="UniProtKB-SubCell"/>
</dbReference>
<reference key="1">
    <citation type="journal article" date="1997" name="Science">
        <title>The complete genome sequence of Escherichia coli K-12.</title>
        <authorList>
            <person name="Blattner F.R."/>
            <person name="Plunkett G. III"/>
            <person name="Bloch C.A."/>
            <person name="Perna N.T."/>
            <person name="Burland V."/>
            <person name="Riley M."/>
            <person name="Collado-Vides J."/>
            <person name="Glasner J.D."/>
            <person name="Rode C.K."/>
            <person name="Mayhew G.F."/>
            <person name="Gregor J."/>
            <person name="Davis N.W."/>
            <person name="Kirkpatrick H.A."/>
            <person name="Goeden M.A."/>
            <person name="Rose D.J."/>
            <person name="Mau B."/>
            <person name="Shao Y."/>
        </authorList>
    </citation>
    <scope>NUCLEOTIDE SEQUENCE [LARGE SCALE GENOMIC DNA]</scope>
    <source>
        <strain>K12 / MG1655 / ATCC 47076</strain>
    </source>
</reference>
<reference key="2">
    <citation type="journal article" date="2006" name="Mol. Syst. Biol.">
        <title>Highly accurate genome sequences of Escherichia coli K-12 strains MG1655 and W3110.</title>
        <authorList>
            <person name="Hayashi K."/>
            <person name="Morooka N."/>
            <person name="Yamamoto Y."/>
            <person name="Fujita K."/>
            <person name="Isono K."/>
            <person name="Choi S."/>
            <person name="Ohtsubo E."/>
            <person name="Baba T."/>
            <person name="Wanner B.L."/>
            <person name="Mori H."/>
            <person name="Horiuchi T."/>
        </authorList>
    </citation>
    <scope>NUCLEOTIDE SEQUENCE [LARGE SCALE GENOMIC DNA]</scope>
    <source>
        <strain>K12 / W3110 / ATCC 27325 / DSM 5911</strain>
    </source>
</reference>
<gene>
    <name type="primary">ymfE</name>
    <name type="ordered locus">b1138</name>
    <name type="ordered locus">JW5166</name>
</gene>
<organism>
    <name type="scientific">Escherichia coli (strain K12)</name>
    <dbReference type="NCBI Taxonomy" id="83333"/>
    <lineage>
        <taxon>Bacteria</taxon>
        <taxon>Pseudomonadati</taxon>
        <taxon>Pseudomonadota</taxon>
        <taxon>Gammaproteobacteria</taxon>
        <taxon>Enterobacterales</taxon>
        <taxon>Enterobacteriaceae</taxon>
        <taxon>Escherichia</taxon>
    </lineage>
</organism>
<comment type="subcellular location">
    <subcellularLocation>
        <location evidence="2">Cell membrane</location>
        <topology evidence="2">Multi-pass membrane protein</topology>
    </subcellularLocation>
</comment>
<keyword id="KW-1003">Cell membrane</keyword>
<keyword id="KW-0472">Membrane</keyword>
<keyword id="KW-1185">Reference proteome</keyword>
<keyword id="KW-0812">Transmembrane</keyword>
<keyword id="KW-1133">Transmembrane helix</keyword>
<protein>
    <recommendedName>
        <fullName>Uncharacterized protein YmfE</fullName>
    </recommendedName>
</protein>
<proteinExistence type="predicted"/>
<feature type="chain" id="PRO_0000168842" description="Uncharacterized protein YmfE">
    <location>
        <begin position="1"/>
        <end position="234"/>
    </location>
</feature>
<feature type="transmembrane region" description="Helical" evidence="1">
    <location>
        <begin position="22"/>
        <end position="42"/>
    </location>
</feature>
<feature type="transmembrane region" description="Helical" evidence="1">
    <location>
        <begin position="59"/>
        <end position="79"/>
    </location>
</feature>
<feature type="transmembrane region" description="Helical" evidence="1">
    <location>
        <begin position="154"/>
        <end position="174"/>
    </location>
</feature>
<feature type="transmembrane region" description="Helical" evidence="1">
    <location>
        <begin position="186"/>
        <end position="206"/>
    </location>
</feature>
<evidence type="ECO:0000255" key="1"/>
<evidence type="ECO:0000305" key="2"/>
<name>YMFE_ECOLI</name>
<sequence length="234" mass="27579">MNNMFEPPKNYNEMLPKLHKATFLNTLIYCILLVIYEYIPLITLPTKYVPPIKDHESFINWALSFGILPCAFAIFAYLISGALDLHNNAAKLLRVRYLWDKHLIIKPLSRRAGVNRKLNKDEAHNVMSNLYYPEVRKIEDKHYIELFWNKVYYFWIFFEFSIIALISFLIIFFCKQMDIFHVEGSLLSLFFFVILSFSVSGIIFALTVKPRTESQVGKIPDDKIKEFFTKNNIN</sequence>
<accession>P75968</accession>
<accession>Q2MBI0</accession>